<accession>P85964</accession>
<evidence type="ECO:0000250" key="1"/>
<evidence type="ECO:0000250" key="2">
    <source>
        <dbReference type="UniProtKB" id="O64404"/>
    </source>
</evidence>
<evidence type="ECO:0000250" key="3">
    <source>
        <dbReference type="UniProtKB" id="O81086"/>
    </source>
</evidence>
<evidence type="ECO:0000255" key="4"/>
<evidence type="ECO:0000303" key="5">
    <source>
    </source>
</evidence>
<proteinExistence type="evidence at protein level"/>
<dbReference type="EC" id="4.2.3.38"/>
<dbReference type="SMR" id="P85964"/>
<dbReference type="UniPathway" id="UPA00924"/>
<dbReference type="GO" id="GO:0005737">
    <property type="term" value="C:cytoplasm"/>
    <property type="evidence" value="ECO:0007669"/>
    <property type="project" value="UniProtKB-SubCell"/>
</dbReference>
<dbReference type="GO" id="GO:0052681">
    <property type="term" value="F:alpha-bisabolene synthase activity"/>
    <property type="evidence" value="ECO:0007669"/>
    <property type="project" value="UniProtKB-EC"/>
</dbReference>
<dbReference type="GO" id="GO:0046872">
    <property type="term" value="F:metal ion binding"/>
    <property type="evidence" value="ECO:0007669"/>
    <property type="project" value="UniProtKB-KW"/>
</dbReference>
<dbReference type="Gene3D" id="1.10.600.10">
    <property type="entry name" value="Farnesyl Diphosphate Synthase"/>
    <property type="match status" value="2"/>
</dbReference>
<dbReference type="InterPro" id="IPR008949">
    <property type="entry name" value="Isoprenoid_synthase_dom_sf"/>
</dbReference>
<dbReference type="Pfam" id="PF19086">
    <property type="entry name" value="Terpene_syn_C_2"/>
    <property type="match status" value="1"/>
</dbReference>
<dbReference type="SUPFAM" id="SSF48576">
    <property type="entry name" value="Terpenoid synthases"/>
    <property type="match status" value="1"/>
</dbReference>
<name>TPSD1_PSEMZ</name>
<feature type="chain" id="PRO_0000392515" description="Alpha-bisabolene synthase">
    <location>
        <begin position="1" status="less than"/>
        <end position="66" status="greater than"/>
    </location>
</feature>
<feature type="non-consecutive residues" evidence="5">
    <location>
        <begin position="7"/>
        <end position="8"/>
    </location>
</feature>
<feature type="non-consecutive residues" evidence="5">
    <location>
        <begin position="29"/>
        <end position="30"/>
    </location>
</feature>
<feature type="non-terminal residue" evidence="5">
    <location>
        <position position="1"/>
    </location>
</feature>
<feature type="non-terminal residue" evidence="5">
    <location>
        <position position="66"/>
    </location>
</feature>
<comment type="function">
    <text evidence="3">Involved in defensive oleoresin formation in conifers in response to insect attack or other injury. Involved in sesquiterpene (C15) olefins biosynthesis (By similarity).</text>
</comment>
<comment type="catalytic activity">
    <reaction>
        <text>(2E,6E)-farnesyl diphosphate = (E,R)-alpha-bisabolene + diphosphate</text>
        <dbReference type="Rhea" id="RHEA:25436"/>
        <dbReference type="ChEBI" id="CHEBI:33019"/>
        <dbReference type="ChEBI" id="CHEBI:49243"/>
        <dbReference type="ChEBI" id="CHEBI:175763"/>
        <dbReference type="EC" id="4.2.3.38"/>
    </reaction>
</comment>
<comment type="cofactor">
    <cofactor evidence="2">
        <name>Mn(2+)</name>
        <dbReference type="ChEBI" id="CHEBI:29035"/>
    </cofactor>
</comment>
<comment type="cofactor">
    <cofactor evidence="2">
        <name>K(+)</name>
        <dbReference type="ChEBI" id="CHEBI:29103"/>
    </cofactor>
</comment>
<comment type="pathway">
    <text evidence="3">Terpene metabolism; oleoresin biosynthesis.</text>
</comment>
<comment type="subcellular location">
    <subcellularLocation>
        <location evidence="1">Cytoplasm</location>
    </subcellularLocation>
</comment>
<comment type="similarity">
    <text evidence="4">Belongs to the terpene synthase family. Tpsd subfamily.</text>
</comment>
<reference key="1">
    <citation type="journal article" date="2008" name="J. Proteomics">
        <title>A proteomics approach to identify proteins differentially expressed in Douglas-fir seedlings infected by Phellinus sulphurascens.</title>
        <authorList>
            <person name="Islam M.A."/>
            <person name="Sturrock R.N."/>
            <person name="Ekramoddoullah A.K.M."/>
        </authorList>
    </citation>
    <scope>IDENTIFICATION BY MASS SPECTROMETRY</scope>
</reference>
<protein>
    <recommendedName>
        <fullName evidence="3">Alpha-bisabolene synthase</fullName>
        <ecNumber>4.2.3.38</ecNumber>
    </recommendedName>
    <alternativeName>
        <fullName evidence="3">(E)-alpha-bisabolene synthase</fullName>
    </alternativeName>
</protein>
<organism>
    <name type="scientific">Pseudotsuga menziesii</name>
    <name type="common">Douglas-fir</name>
    <name type="synonym">Abies menziesii</name>
    <dbReference type="NCBI Taxonomy" id="3357"/>
    <lineage>
        <taxon>Eukaryota</taxon>
        <taxon>Viridiplantae</taxon>
        <taxon>Streptophyta</taxon>
        <taxon>Embryophyta</taxon>
        <taxon>Tracheophyta</taxon>
        <taxon>Spermatophyta</taxon>
        <taxon>Pinopsida</taxon>
        <taxon>Pinidae</taxon>
        <taxon>Conifers I</taxon>
        <taxon>Pinales</taxon>
        <taxon>Pinaceae</taxon>
        <taxon>Pseudotsuga</taxon>
    </lineage>
</organism>
<keyword id="KW-0963">Cytoplasm</keyword>
<keyword id="KW-0456">Lyase</keyword>
<keyword id="KW-0464">Manganese</keyword>
<keyword id="KW-0479">Metal-binding</keyword>
<sequence length="66" mass="8105">RQERLAKLFTEAVRRWDVSFTENLPDYMKELVSFFRKGWEDYLLGYYEEAEWLAAEYVPSLDEYIK</sequence>